<gene>
    <name evidence="1" type="primary">actP</name>
    <name type="ordered locus">SeAg_B4533</name>
</gene>
<accession>B5F2E9</accession>
<proteinExistence type="inferred from homology"/>
<sequence>MKRVLTALAAALPFAAHAADAISGAVERQPTNWQAIIMFLIFVVFTLGITYWASKRVRSRSDYYTAGGNITGFQNGLAIAGDYMSAASFLGISALVFTSGYDGLIYSLGFLVGWPIILFLIAERLRNLGRYTFADVASYRLKQGPIRILSACGSLVVVALYLIAQMVGAGKLIELLFGLNYHIAVVLVGVLMMMYVLFGGMLATTWVQIIKAVLLLFGASFMAFMVMKHVGFSFNNLFTEAMAVHPKGTAIMSPGGLVQDPISALSLGLGLMFGTAGLPHILMRFFTVSDAREARKSVFYATGFMGYFYILTFIIGFGAIMLVGANPAYKDAAGALIGGNNMAAVHLANAVGGNLFLGFISAVAFATILAVVAGLTLAGASAVSHDLYANVFRKGATEREELKVSKITVLVLGVIAIILGVLFENQNIAFMVGLAFAIAASCNFPIILLSMYWSKLTTRGAMLGGWLGLLTAVVLMILGPTIWVQILGHEKAIFPYEYPALFSISVAFLGIWFFSATDNSAEGNREREQFRAQFIRSQTGFGVQQGRAH</sequence>
<organism>
    <name type="scientific">Salmonella agona (strain SL483)</name>
    <dbReference type="NCBI Taxonomy" id="454166"/>
    <lineage>
        <taxon>Bacteria</taxon>
        <taxon>Pseudomonadati</taxon>
        <taxon>Pseudomonadota</taxon>
        <taxon>Gammaproteobacteria</taxon>
        <taxon>Enterobacterales</taxon>
        <taxon>Enterobacteriaceae</taxon>
        <taxon>Salmonella</taxon>
    </lineage>
</organism>
<name>ACTP_SALA4</name>
<keyword id="KW-0997">Cell inner membrane</keyword>
<keyword id="KW-1003">Cell membrane</keyword>
<keyword id="KW-0406">Ion transport</keyword>
<keyword id="KW-0472">Membrane</keyword>
<keyword id="KW-0915">Sodium</keyword>
<keyword id="KW-0739">Sodium transport</keyword>
<keyword id="KW-0769">Symport</keyword>
<keyword id="KW-0812">Transmembrane</keyword>
<keyword id="KW-1133">Transmembrane helix</keyword>
<keyword id="KW-0813">Transport</keyword>
<feature type="chain" id="PRO_1000145722" description="Cation/acetate symporter ActP">
    <location>
        <begin position="1"/>
        <end position="549"/>
    </location>
</feature>
<feature type="transmembrane region" description="Helical" evidence="1">
    <location>
        <begin position="33"/>
        <end position="53"/>
    </location>
</feature>
<feature type="transmembrane region" description="Helical" evidence="1">
    <location>
        <begin position="77"/>
        <end position="97"/>
    </location>
</feature>
<feature type="transmembrane region" description="Helical" evidence="1">
    <location>
        <begin position="103"/>
        <end position="123"/>
    </location>
</feature>
<feature type="transmembrane region" description="Helical" evidence="1">
    <location>
        <begin position="148"/>
        <end position="168"/>
    </location>
</feature>
<feature type="transmembrane region" description="Helical" evidence="1">
    <location>
        <begin position="183"/>
        <end position="203"/>
    </location>
</feature>
<feature type="transmembrane region" description="Helical" evidence="1">
    <location>
        <begin position="206"/>
        <end position="226"/>
    </location>
</feature>
<feature type="transmembrane region" description="Helical" evidence="1">
    <location>
        <begin position="262"/>
        <end position="282"/>
    </location>
</feature>
<feature type="transmembrane region" description="Helical" evidence="1">
    <location>
        <begin position="303"/>
        <end position="323"/>
    </location>
</feature>
<feature type="transmembrane region" description="Helical" evidence="1">
    <location>
        <begin position="355"/>
        <end position="375"/>
    </location>
</feature>
<feature type="transmembrane region" description="Helical" evidence="1">
    <location>
        <begin position="404"/>
        <end position="424"/>
    </location>
</feature>
<feature type="transmembrane region" description="Helical" evidence="1">
    <location>
        <begin position="428"/>
        <end position="448"/>
    </location>
</feature>
<feature type="transmembrane region" description="Helical" evidence="1">
    <location>
        <begin position="464"/>
        <end position="484"/>
    </location>
</feature>
<feature type="transmembrane region" description="Helical" evidence="1">
    <location>
        <begin position="493"/>
        <end position="513"/>
    </location>
</feature>
<reference key="1">
    <citation type="journal article" date="2011" name="J. Bacteriol.">
        <title>Comparative genomics of 28 Salmonella enterica isolates: evidence for CRISPR-mediated adaptive sublineage evolution.</title>
        <authorList>
            <person name="Fricke W.F."/>
            <person name="Mammel M.K."/>
            <person name="McDermott P.F."/>
            <person name="Tartera C."/>
            <person name="White D.G."/>
            <person name="Leclerc J.E."/>
            <person name="Ravel J."/>
            <person name="Cebula T.A."/>
        </authorList>
    </citation>
    <scope>NUCLEOTIDE SEQUENCE [LARGE SCALE GENOMIC DNA]</scope>
    <source>
        <strain>SL483</strain>
    </source>
</reference>
<evidence type="ECO:0000255" key="1">
    <source>
        <dbReference type="HAMAP-Rule" id="MF_01426"/>
    </source>
</evidence>
<dbReference type="EMBL" id="CP001138">
    <property type="protein sequence ID" value="ACH52359.1"/>
    <property type="molecule type" value="Genomic_DNA"/>
</dbReference>
<dbReference type="RefSeq" id="WP_000832536.1">
    <property type="nucleotide sequence ID" value="NC_011149.1"/>
</dbReference>
<dbReference type="SMR" id="B5F2E9"/>
<dbReference type="KEGG" id="sea:SeAg_B4533"/>
<dbReference type="HOGENOM" id="CLU_018808_8_3_6"/>
<dbReference type="Proteomes" id="UP000008819">
    <property type="component" value="Chromosome"/>
</dbReference>
<dbReference type="GO" id="GO:0005886">
    <property type="term" value="C:plasma membrane"/>
    <property type="evidence" value="ECO:0007669"/>
    <property type="project" value="UniProtKB-SubCell"/>
</dbReference>
<dbReference type="GO" id="GO:0015123">
    <property type="term" value="F:acetate transmembrane transporter activity"/>
    <property type="evidence" value="ECO:0007669"/>
    <property type="project" value="UniProtKB-UniRule"/>
</dbReference>
<dbReference type="GO" id="GO:0043879">
    <property type="term" value="F:glycolate transmembrane transporter activity"/>
    <property type="evidence" value="ECO:0007669"/>
    <property type="project" value="InterPro"/>
</dbReference>
<dbReference type="GO" id="GO:0015293">
    <property type="term" value="F:symporter activity"/>
    <property type="evidence" value="ECO:0007669"/>
    <property type="project" value="UniProtKB-KW"/>
</dbReference>
<dbReference type="GO" id="GO:0006847">
    <property type="term" value="P:plasma membrane acetate transport"/>
    <property type="evidence" value="ECO:0007669"/>
    <property type="project" value="TreeGrafter"/>
</dbReference>
<dbReference type="GO" id="GO:0006814">
    <property type="term" value="P:sodium ion transport"/>
    <property type="evidence" value="ECO:0007669"/>
    <property type="project" value="UniProtKB-KW"/>
</dbReference>
<dbReference type="CDD" id="cd11480">
    <property type="entry name" value="SLC5sbd_u4"/>
    <property type="match status" value="1"/>
</dbReference>
<dbReference type="FunFam" id="1.20.1730.10:FF:000001">
    <property type="entry name" value="Cation/acetate symporter ActP"/>
    <property type="match status" value="1"/>
</dbReference>
<dbReference type="Gene3D" id="1.20.1730.10">
    <property type="entry name" value="Sodium/glucose cotransporter"/>
    <property type="match status" value="1"/>
</dbReference>
<dbReference type="HAMAP" id="MF_01426">
    <property type="entry name" value="Acet_symport_ActP"/>
    <property type="match status" value="1"/>
</dbReference>
<dbReference type="InterPro" id="IPR014083">
    <property type="entry name" value="Cation/Ac_symporter_ActP"/>
</dbReference>
<dbReference type="InterPro" id="IPR038377">
    <property type="entry name" value="Na/Glc_symporter_sf"/>
</dbReference>
<dbReference type="InterPro" id="IPR001734">
    <property type="entry name" value="Na/solute_symporter"/>
</dbReference>
<dbReference type="InterPro" id="IPR018212">
    <property type="entry name" value="Na/solute_symporter_CS"/>
</dbReference>
<dbReference type="InterPro" id="IPR050277">
    <property type="entry name" value="Sodium:Solute_Symporter"/>
</dbReference>
<dbReference type="NCBIfam" id="NF006903">
    <property type="entry name" value="PRK09395.1"/>
    <property type="match status" value="1"/>
</dbReference>
<dbReference type="NCBIfam" id="NF009135">
    <property type="entry name" value="PRK12488.1"/>
    <property type="match status" value="1"/>
</dbReference>
<dbReference type="NCBIfam" id="TIGR00813">
    <property type="entry name" value="sss"/>
    <property type="match status" value="1"/>
</dbReference>
<dbReference type="NCBIfam" id="TIGR02711">
    <property type="entry name" value="symport_actP"/>
    <property type="match status" value="1"/>
</dbReference>
<dbReference type="PANTHER" id="PTHR48086:SF6">
    <property type="entry name" value="CATION_ACETATE SYMPORTER ACTP"/>
    <property type="match status" value="1"/>
</dbReference>
<dbReference type="PANTHER" id="PTHR48086">
    <property type="entry name" value="SODIUM/PROLINE SYMPORTER-RELATED"/>
    <property type="match status" value="1"/>
</dbReference>
<dbReference type="Pfam" id="PF00474">
    <property type="entry name" value="SSF"/>
    <property type="match status" value="1"/>
</dbReference>
<dbReference type="PROSITE" id="PS00456">
    <property type="entry name" value="NA_SOLUT_SYMP_1"/>
    <property type="match status" value="1"/>
</dbReference>
<dbReference type="PROSITE" id="PS00457">
    <property type="entry name" value="NA_SOLUT_SYMP_2"/>
    <property type="match status" value="1"/>
</dbReference>
<dbReference type="PROSITE" id="PS50283">
    <property type="entry name" value="NA_SOLUT_SYMP_3"/>
    <property type="match status" value="1"/>
</dbReference>
<comment type="function">
    <text evidence="1">Transports acetate.</text>
</comment>
<comment type="subcellular location">
    <subcellularLocation>
        <location evidence="1">Cell inner membrane</location>
        <topology evidence="1">Multi-pass membrane protein</topology>
    </subcellularLocation>
</comment>
<comment type="similarity">
    <text evidence="1">Belongs to the sodium:solute symporter (SSF) (TC 2.A.21) family.</text>
</comment>
<protein>
    <recommendedName>
        <fullName evidence="1">Cation/acetate symporter ActP</fullName>
    </recommendedName>
    <alternativeName>
        <fullName evidence="1">Acetate permease</fullName>
    </alternativeName>
    <alternativeName>
        <fullName evidence="1">Acetate transporter ActP</fullName>
    </alternativeName>
</protein>